<dbReference type="EC" id="6.3.2.9" evidence="1"/>
<dbReference type="EMBL" id="CP000903">
    <property type="protein sequence ID" value="ABY44908.1"/>
    <property type="molecule type" value="Genomic_DNA"/>
</dbReference>
<dbReference type="RefSeq" id="WP_012261608.1">
    <property type="nucleotide sequence ID" value="NC_010184.1"/>
</dbReference>
<dbReference type="SMR" id="A9VU74"/>
<dbReference type="KEGG" id="bwe:BcerKBAB4_3739"/>
<dbReference type="eggNOG" id="COG0771">
    <property type="taxonomic scope" value="Bacteria"/>
</dbReference>
<dbReference type="HOGENOM" id="CLU_032540_0_1_9"/>
<dbReference type="UniPathway" id="UPA00219"/>
<dbReference type="Proteomes" id="UP000002154">
    <property type="component" value="Chromosome"/>
</dbReference>
<dbReference type="GO" id="GO:0005737">
    <property type="term" value="C:cytoplasm"/>
    <property type="evidence" value="ECO:0007669"/>
    <property type="project" value="UniProtKB-SubCell"/>
</dbReference>
<dbReference type="GO" id="GO:0005524">
    <property type="term" value="F:ATP binding"/>
    <property type="evidence" value="ECO:0007669"/>
    <property type="project" value="UniProtKB-UniRule"/>
</dbReference>
<dbReference type="GO" id="GO:0008764">
    <property type="term" value="F:UDP-N-acetylmuramoylalanine-D-glutamate ligase activity"/>
    <property type="evidence" value="ECO:0007669"/>
    <property type="project" value="UniProtKB-UniRule"/>
</dbReference>
<dbReference type="GO" id="GO:0051301">
    <property type="term" value="P:cell division"/>
    <property type="evidence" value="ECO:0007669"/>
    <property type="project" value="UniProtKB-KW"/>
</dbReference>
<dbReference type="GO" id="GO:0071555">
    <property type="term" value="P:cell wall organization"/>
    <property type="evidence" value="ECO:0007669"/>
    <property type="project" value="UniProtKB-KW"/>
</dbReference>
<dbReference type="GO" id="GO:0009252">
    <property type="term" value="P:peptidoglycan biosynthetic process"/>
    <property type="evidence" value="ECO:0007669"/>
    <property type="project" value="UniProtKB-UniRule"/>
</dbReference>
<dbReference type="GO" id="GO:0008360">
    <property type="term" value="P:regulation of cell shape"/>
    <property type="evidence" value="ECO:0007669"/>
    <property type="project" value="UniProtKB-KW"/>
</dbReference>
<dbReference type="Gene3D" id="3.90.190.20">
    <property type="entry name" value="Mur ligase, C-terminal domain"/>
    <property type="match status" value="1"/>
</dbReference>
<dbReference type="Gene3D" id="3.40.1190.10">
    <property type="entry name" value="Mur-like, catalytic domain"/>
    <property type="match status" value="1"/>
</dbReference>
<dbReference type="Gene3D" id="3.40.50.720">
    <property type="entry name" value="NAD(P)-binding Rossmann-like Domain"/>
    <property type="match status" value="1"/>
</dbReference>
<dbReference type="HAMAP" id="MF_00639">
    <property type="entry name" value="MurD"/>
    <property type="match status" value="1"/>
</dbReference>
<dbReference type="InterPro" id="IPR036565">
    <property type="entry name" value="Mur-like_cat_sf"/>
</dbReference>
<dbReference type="InterPro" id="IPR004101">
    <property type="entry name" value="Mur_ligase_C"/>
</dbReference>
<dbReference type="InterPro" id="IPR036615">
    <property type="entry name" value="Mur_ligase_C_dom_sf"/>
</dbReference>
<dbReference type="InterPro" id="IPR013221">
    <property type="entry name" value="Mur_ligase_cen"/>
</dbReference>
<dbReference type="InterPro" id="IPR005762">
    <property type="entry name" value="MurD"/>
</dbReference>
<dbReference type="NCBIfam" id="TIGR01087">
    <property type="entry name" value="murD"/>
    <property type="match status" value="1"/>
</dbReference>
<dbReference type="PANTHER" id="PTHR43692">
    <property type="entry name" value="UDP-N-ACETYLMURAMOYLALANINE--D-GLUTAMATE LIGASE"/>
    <property type="match status" value="1"/>
</dbReference>
<dbReference type="PANTHER" id="PTHR43692:SF1">
    <property type="entry name" value="UDP-N-ACETYLMURAMOYLALANINE--D-GLUTAMATE LIGASE"/>
    <property type="match status" value="1"/>
</dbReference>
<dbReference type="Pfam" id="PF02875">
    <property type="entry name" value="Mur_ligase_C"/>
    <property type="match status" value="1"/>
</dbReference>
<dbReference type="Pfam" id="PF08245">
    <property type="entry name" value="Mur_ligase_M"/>
    <property type="match status" value="1"/>
</dbReference>
<dbReference type="Pfam" id="PF21799">
    <property type="entry name" value="MurD-like_N"/>
    <property type="match status" value="1"/>
</dbReference>
<dbReference type="SUPFAM" id="SSF51984">
    <property type="entry name" value="MurCD N-terminal domain"/>
    <property type="match status" value="1"/>
</dbReference>
<dbReference type="SUPFAM" id="SSF53623">
    <property type="entry name" value="MurD-like peptide ligases, catalytic domain"/>
    <property type="match status" value="1"/>
</dbReference>
<dbReference type="SUPFAM" id="SSF53244">
    <property type="entry name" value="MurD-like peptide ligases, peptide-binding domain"/>
    <property type="match status" value="1"/>
</dbReference>
<protein>
    <recommendedName>
        <fullName evidence="1">UDP-N-acetylmuramoylalanine--D-glutamate ligase</fullName>
        <ecNumber evidence="1">6.3.2.9</ecNumber>
    </recommendedName>
    <alternativeName>
        <fullName evidence="1">D-glutamic acid-adding enzyme</fullName>
    </alternativeName>
    <alternativeName>
        <fullName evidence="1">UDP-N-acetylmuramoyl-L-alanyl-D-glutamate synthetase</fullName>
    </alternativeName>
</protein>
<name>MURD_BACMK</name>
<evidence type="ECO:0000255" key="1">
    <source>
        <dbReference type="HAMAP-Rule" id="MF_00639"/>
    </source>
</evidence>
<keyword id="KW-0067">ATP-binding</keyword>
<keyword id="KW-0131">Cell cycle</keyword>
<keyword id="KW-0132">Cell division</keyword>
<keyword id="KW-0133">Cell shape</keyword>
<keyword id="KW-0961">Cell wall biogenesis/degradation</keyword>
<keyword id="KW-0963">Cytoplasm</keyword>
<keyword id="KW-0436">Ligase</keyword>
<keyword id="KW-0547">Nucleotide-binding</keyword>
<keyword id="KW-0573">Peptidoglycan synthesis</keyword>
<proteinExistence type="inferred from homology"/>
<accession>A9VU74</accession>
<comment type="function">
    <text evidence="1">Cell wall formation. Catalyzes the addition of glutamate to the nucleotide precursor UDP-N-acetylmuramoyl-L-alanine (UMA).</text>
</comment>
<comment type="catalytic activity">
    <reaction evidence="1">
        <text>UDP-N-acetyl-alpha-D-muramoyl-L-alanine + D-glutamate + ATP = UDP-N-acetyl-alpha-D-muramoyl-L-alanyl-D-glutamate + ADP + phosphate + H(+)</text>
        <dbReference type="Rhea" id="RHEA:16429"/>
        <dbReference type="ChEBI" id="CHEBI:15378"/>
        <dbReference type="ChEBI" id="CHEBI:29986"/>
        <dbReference type="ChEBI" id="CHEBI:30616"/>
        <dbReference type="ChEBI" id="CHEBI:43474"/>
        <dbReference type="ChEBI" id="CHEBI:83898"/>
        <dbReference type="ChEBI" id="CHEBI:83900"/>
        <dbReference type="ChEBI" id="CHEBI:456216"/>
        <dbReference type="EC" id="6.3.2.9"/>
    </reaction>
</comment>
<comment type="pathway">
    <text evidence="1">Cell wall biogenesis; peptidoglycan biosynthesis.</text>
</comment>
<comment type="subcellular location">
    <subcellularLocation>
        <location evidence="1">Cytoplasm</location>
    </subcellularLocation>
</comment>
<comment type="similarity">
    <text evidence="1">Belongs to the MurCDEF family.</text>
</comment>
<sequence length="450" mass="48645">MKTVTEYQNKNVLVLGIAKSGYAAATLLKKLGANVIVNDGKPLAGNVLAAELQAEGMDVVCGGHPLELLERNISLVVKNPGIPYSNPLLVAAKEKQIPIVTEVELAYSISAAPFVGITGSNGKTTTTMLTFEMLKEGQKHPVIAGNIGTVACEVAQLAKENEVVVTELSSFQLMGVESFQPKIAAFLNLFEAHLDYHGTKKEYGLAKANIFKNQTETDYSIINADDADVMALSAYSKGQKVLFSTTKEIEDGAYIKDNALYFKGEKVVKVSDIVLPGKHNLENILAAMSIAKLLGVSNEAITAVLKSFTGVKHRLEYVTTINNRKFYNDSKATNMLATEKALSAFTQPIVLLAGGLDRGNEFDDLIPYFKHVKAIVTFGQTAPKLVRAAEKAGLDVIESVDTLDDAVVKAYAHSTDGDVILLSPACASWDQFKTFEERGDIFIQAVHKLI</sequence>
<organism>
    <name type="scientific">Bacillus mycoides (strain KBAB4)</name>
    <name type="common">Bacillus weihenstephanensis</name>
    <dbReference type="NCBI Taxonomy" id="315730"/>
    <lineage>
        <taxon>Bacteria</taxon>
        <taxon>Bacillati</taxon>
        <taxon>Bacillota</taxon>
        <taxon>Bacilli</taxon>
        <taxon>Bacillales</taxon>
        <taxon>Bacillaceae</taxon>
        <taxon>Bacillus</taxon>
        <taxon>Bacillus cereus group</taxon>
    </lineage>
</organism>
<reference key="1">
    <citation type="journal article" date="2008" name="Chem. Biol. Interact.">
        <title>Extending the Bacillus cereus group genomics to putative food-borne pathogens of different toxicity.</title>
        <authorList>
            <person name="Lapidus A."/>
            <person name="Goltsman E."/>
            <person name="Auger S."/>
            <person name="Galleron N."/>
            <person name="Segurens B."/>
            <person name="Dossat C."/>
            <person name="Land M.L."/>
            <person name="Broussolle V."/>
            <person name="Brillard J."/>
            <person name="Guinebretiere M.-H."/>
            <person name="Sanchis V."/>
            <person name="Nguen-the C."/>
            <person name="Lereclus D."/>
            <person name="Richardson P."/>
            <person name="Wincker P."/>
            <person name="Weissenbach J."/>
            <person name="Ehrlich S.D."/>
            <person name="Sorokin A."/>
        </authorList>
    </citation>
    <scope>NUCLEOTIDE SEQUENCE [LARGE SCALE GENOMIC DNA]</scope>
    <source>
        <strain>KBAB4</strain>
    </source>
</reference>
<gene>
    <name evidence="1" type="primary">murD</name>
    <name type="ordered locus">BcerKBAB4_3739</name>
</gene>
<feature type="chain" id="PRO_1000130828" description="UDP-N-acetylmuramoylalanine--D-glutamate ligase">
    <location>
        <begin position="1"/>
        <end position="450"/>
    </location>
</feature>
<feature type="binding site" evidence="1">
    <location>
        <begin position="119"/>
        <end position="125"/>
    </location>
    <ligand>
        <name>ATP</name>
        <dbReference type="ChEBI" id="CHEBI:30616"/>
    </ligand>
</feature>